<protein>
    <recommendedName>
        <fullName evidence="1">Co-chaperonin GroES</fullName>
    </recommendedName>
    <alternativeName>
        <fullName evidence="1">10 kDa chaperonin</fullName>
    </alternativeName>
    <alternativeName>
        <fullName evidence="1">Chaperonin-10</fullName>
        <shortName evidence="1">Cpn10</shortName>
    </alternativeName>
</protein>
<dbReference type="EMBL" id="CP000733">
    <property type="protein sequence ID" value="ABS77081.2"/>
    <property type="status" value="ALT_INIT"/>
    <property type="molecule type" value="Genomic_DNA"/>
</dbReference>
<dbReference type="RefSeq" id="WP_005770495.1">
    <property type="nucleotide sequence ID" value="NC_009727.1"/>
</dbReference>
<dbReference type="SMR" id="A9KC14"/>
<dbReference type="KEGG" id="cbd:CBUD_0286"/>
<dbReference type="HOGENOM" id="CLU_132825_1_0_6"/>
<dbReference type="Proteomes" id="UP000008555">
    <property type="component" value="Chromosome"/>
</dbReference>
<dbReference type="GO" id="GO:0005737">
    <property type="term" value="C:cytoplasm"/>
    <property type="evidence" value="ECO:0007669"/>
    <property type="project" value="UniProtKB-SubCell"/>
</dbReference>
<dbReference type="GO" id="GO:0005524">
    <property type="term" value="F:ATP binding"/>
    <property type="evidence" value="ECO:0007669"/>
    <property type="project" value="InterPro"/>
</dbReference>
<dbReference type="GO" id="GO:0046872">
    <property type="term" value="F:metal ion binding"/>
    <property type="evidence" value="ECO:0007669"/>
    <property type="project" value="TreeGrafter"/>
</dbReference>
<dbReference type="GO" id="GO:0044183">
    <property type="term" value="F:protein folding chaperone"/>
    <property type="evidence" value="ECO:0007669"/>
    <property type="project" value="InterPro"/>
</dbReference>
<dbReference type="GO" id="GO:0051087">
    <property type="term" value="F:protein-folding chaperone binding"/>
    <property type="evidence" value="ECO:0007669"/>
    <property type="project" value="TreeGrafter"/>
</dbReference>
<dbReference type="GO" id="GO:0051082">
    <property type="term" value="F:unfolded protein binding"/>
    <property type="evidence" value="ECO:0007669"/>
    <property type="project" value="TreeGrafter"/>
</dbReference>
<dbReference type="GO" id="GO:0051085">
    <property type="term" value="P:chaperone cofactor-dependent protein refolding"/>
    <property type="evidence" value="ECO:0007669"/>
    <property type="project" value="TreeGrafter"/>
</dbReference>
<dbReference type="CDD" id="cd00320">
    <property type="entry name" value="cpn10"/>
    <property type="match status" value="1"/>
</dbReference>
<dbReference type="FunFam" id="2.30.33.40:FF:000001">
    <property type="entry name" value="10 kDa chaperonin"/>
    <property type="match status" value="1"/>
</dbReference>
<dbReference type="Gene3D" id="2.30.33.40">
    <property type="entry name" value="GroES chaperonin"/>
    <property type="match status" value="1"/>
</dbReference>
<dbReference type="HAMAP" id="MF_00580">
    <property type="entry name" value="CH10"/>
    <property type="match status" value="1"/>
</dbReference>
<dbReference type="InterPro" id="IPR020818">
    <property type="entry name" value="Chaperonin_GroES"/>
</dbReference>
<dbReference type="InterPro" id="IPR037124">
    <property type="entry name" value="Chaperonin_GroES_sf"/>
</dbReference>
<dbReference type="InterPro" id="IPR018369">
    <property type="entry name" value="Chaprnonin_Cpn10_CS"/>
</dbReference>
<dbReference type="InterPro" id="IPR011032">
    <property type="entry name" value="GroES-like_sf"/>
</dbReference>
<dbReference type="NCBIfam" id="NF001527">
    <property type="entry name" value="PRK00364.1-2"/>
    <property type="match status" value="1"/>
</dbReference>
<dbReference type="NCBIfam" id="NF001529">
    <property type="entry name" value="PRK00364.1-5"/>
    <property type="match status" value="1"/>
</dbReference>
<dbReference type="NCBIfam" id="NF001531">
    <property type="entry name" value="PRK00364.2-2"/>
    <property type="match status" value="1"/>
</dbReference>
<dbReference type="NCBIfam" id="NF001533">
    <property type="entry name" value="PRK00364.2-4"/>
    <property type="match status" value="1"/>
</dbReference>
<dbReference type="NCBIfam" id="NF001534">
    <property type="entry name" value="PRK00364.2-5"/>
    <property type="match status" value="1"/>
</dbReference>
<dbReference type="PANTHER" id="PTHR10772">
    <property type="entry name" value="10 KDA HEAT SHOCK PROTEIN"/>
    <property type="match status" value="1"/>
</dbReference>
<dbReference type="PANTHER" id="PTHR10772:SF58">
    <property type="entry name" value="CO-CHAPERONIN GROES"/>
    <property type="match status" value="1"/>
</dbReference>
<dbReference type="Pfam" id="PF00166">
    <property type="entry name" value="Cpn10"/>
    <property type="match status" value="1"/>
</dbReference>
<dbReference type="PRINTS" id="PR00297">
    <property type="entry name" value="CHAPERONIN10"/>
</dbReference>
<dbReference type="SMART" id="SM00883">
    <property type="entry name" value="Cpn10"/>
    <property type="match status" value="1"/>
</dbReference>
<dbReference type="SUPFAM" id="SSF50129">
    <property type="entry name" value="GroES-like"/>
    <property type="match status" value="1"/>
</dbReference>
<dbReference type="PROSITE" id="PS00681">
    <property type="entry name" value="CHAPERONINS_CPN10"/>
    <property type="match status" value="1"/>
</dbReference>
<reference key="1">
    <citation type="journal article" date="2009" name="Infect. Immun.">
        <title>Comparative genomics reveal extensive transposon-mediated genomic plasticity and diversity among potential effector proteins within the genus Coxiella.</title>
        <authorList>
            <person name="Beare P.A."/>
            <person name="Unsworth N."/>
            <person name="Andoh M."/>
            <person name="Voth D.E."/>
            <person name="Omsland A."/>
            <person name="Gilk S.D."/>
            <person name="Williams K.P."/>
            <person name="Sobral B.W."/>
            <person name="Kupko J.J. III"/>
            <person name="Porcella S.F."/>
            <person name="Samuel J.E."/>
            <person name="Heinzen R.A."/>
        </authorList>
    </citation>
    <scope>NUCLEOTIDE SEQUENCE [LARGE SCALE GENOMIC DNA]</scope>
    <source>
        <strain>Dugway 5J108-111</strain>
    </source>
</reference>
<proteinExistence type="inferred from homology"/>
<comment type="function">
    <text evidence="1">Together with the chaperonin GroEL, plays an essential role in assisting protein folding. The GroEL-GroES system forms a nano-cage that allows encapsulation of the non-native substrate proteins and provides a physical environment optimized to promote and accelerate protein folding. GroES binds to the apical surface of the GroEL ring, thereby capping the opening of the GroEL channel.</text>
</comment>
<comment type="subunit">
    <text evidence="1">Heptamer of 7 subunits arranged in a ring. Interacts with the chaperonin GroEL.</text>
</comment>
<comment type="subcellular location">
    <subcellularLocation>
        <location evidence="1">Cytoplasm</location>
    </subcellularLocation>
</comment>
<comment type="similarity">
    <text evidence="1">Belongs to the GroES chaperonin family.</text>
</comment>
<comment type="sequence caution" evidence="2">
    <conflict type="erroneous initiation">
        <sequence resource="EMBL-CDS" id="ABS77081"/>
    </conflict>
</comment>
<name>CH10_COXBN</name>
<evidence type="ECO:0000255" key="1">
    <source>
        <dbReference type="HAMAP-Rule" id="MF_00580"/>
    </source>
</evidence>
<evidence type="ECO:0000305" key="2"/>
<sequence length="96" mass="10503">MKIRPLHDRVVVRRLEEERTSAGGIVIPDSAAEKPSRGEVISVGPGKPLDNGEVRSLDVKVGDQILFGKYAGTEVKLAGDEYIVMREDDIMGVIEK</sequence>
<accession>A9KC14</accession>
<keyword id="KW-0143">Chaperone</keyword>
<keyword id="KW-0963">Cytoplasm</keyword>
<feature type="chain" id="PRO_1000082372" description="Co-chaperonin GroES">
    <location>
        <begin position="1"/>
        <end position="96"/>
    </location>
</feature>
<organism>
    <name type="scientific">Coxiella burnetii (strain Dugway 5J108-111)</name>
    <dbReference type="NCBI Taxonomy" id="434922"/>
    <lineage>
        <taxon>Bacteria</taxon>
        <taxon>Pseudomonadati</taxon>
        <taxon>Pseudomonadota</taxon>
        <taxon>Gammaproteobacteria</taxon>
        <taxon>Legionellales</taxon>
        <taxon>Coxiellaceae</taxon>
        <taxon>Coxiella</taxon>
    </lineage>
</organism>
<gene>
    <name evidence="1" type="primary">groES</name>
    <name evidence="1" type="synonym">groS</name>
    <name type="ordered locus">CBUD_0286</name>
</gene>